<protein>
    <recommendedName>
        <fullName evidence="5">Golgi-associated RAB2 interactor protein 4</fullName>
    </recommendedName>
    <alternativeName>
        <fullName evidence="4">Golgi-associated Rab2B interactor-like 4</fullName>
        <shortName evidence="4">GARI-L4</shortName>
        <shortName evidence="4">GARI-like 4</shortName>
    </alternativeName>
</protein>
<reference key="1">
    <citation type="journal article" date="2006" name="Nature">
        <title>The DNA sequence and biological annotation of human chromosome 1.</title>
        <authorList>
            <person name="Gregory S.G."/>
            <person name="Barlow K.F."/>
            <person name="McLay K.E."/>
            <person name="Kaul R."/>
            <person name="Swarbreck D."/>
            <person name="Dunham A."/>
            <person name="Scott C.E."/>
            <person name="Howe K.L."/>
            <person name="Woodfine K."/>
            <person name="Spencer C.C.A."/>
            <person name="Jones M.C."/>
            <person name="Gillson C."/>
            <person name="Searle S."/>
            <person name="Zhou Y."/>
            <person name="Kokocinski F."/>
            <person name="McDonald L."/>
            <person name="Evans R."/>
            <person name="Phillips K."/>
            <person name="Atkinson A."/>
            <person name="Cooper R."/>
            <person name="Jones C."/>
            <person name="Hall R.E."/>
            <person name="Andrews T.D."/>
            <person name="Lloyd C."/>
            <person name="Ainscough R."/>
            <person name="Almeida J.P."/>
            <person name="Ambrose K.D."/>
            <person name="Anderson F."/>
            <person name="Andrew R.W."/>
            <person name="Ashwell R.I.S."/>
            <person name="Aubin K."/>
            <person name="Babbage A.K."/>
            <person name="Bagguley C.L."/>
            <person name="Bailey J."/>
            <person name="Beasley H."/>
            <person name="Bethel G."/>
            <person name="Bird C.P."/>
            <person name="Bray-Allen S."/>
            <person name="Brown J.Y."/>
            <person name="Brown A.J."/>
            <person name="Buckley D."/>
            <person name="Burton J."/>
            <person name="Bye J."/>
            <person name="Carder C."/>
            <person name="Chapman J.C."/>
            <person name="Clark S.Y."/>
            <person name="Clarke G."/>
            <person name="Clee C."/>
            <person name="Cobley V."/>
            <person name="Collier R.E."/>
            <person name="Corby N."/>
            <person name="Coville G.J."/>
            <person name="Davies J."/>
            <person name="Deadman R."/>
            <person name="Dunn M."/>
            <person name="Earthrowl M."/>
            <person name="Ellington A.G."/>
            <person name="Errington H."/>
            <person name="Frankish A."/>
            <person name="Frankland J."/>
            <person name="French L."/>
            <person name="Garner P."/>
            <person name="Garnett J."/>
            <person name="Gay L."/>
            <person name="Ghori M.R.J."/>
            <person name="Gibson R."/>
            <person name="Gilby L.M."/>
            <person name="Gillett W."/>
            <person name="Glithero R.J."/>
            <person name="Grafham D.V."/>
            <person name="Griffiths C."/>
            <person name="Griffiths-Jones S."/>
            <person name="Grocock R."/>
            <person name="Hammond S."/>
            <person name="Harrison E.S.I."/>
            <person name="Hart E."/>
            <person name="Haugen E."/>
            <person name="Heath P.D."/>
            <person name="Holmes S."/>
            <person name="Holt K."/>
            <person name="Howden P.J."/>
            <person name="Hunt A.R."/>
            <person name="Hunt S.E."/>
            <person name="Hunter G."/>
            <person name="Isherwood J."/>
            <person name="James R."/>
            <person name="Johnson C."/>
            <person name="Johnson D."/>
            <person name="Joy A."/>
            <person name="Kay M."/>
            <person name="Kershaw J.K."/>
            <person name="Kibukawa M."/>
            <person name="Kimberley A.M."/>
            <person name="King A."/>
            <person name="Knights A.J."/>
            <person name="Lad H."/>
            <person name="Laird G."/>
            <person name="Lawlor S."/>
            <person name="Leongamornlert D.A."/>
            <person name="Lloyd D.M."/>
            <person name="Loveland J."/>
            <person name="Lovell J."/>
            <person name="Lush M.J."/>
            <person name="Lyne R."/>
            <person name="Martin S."/>
            <person name="Mashreghi-Mohammadi M."/>
            <person name="Matthews L."/>
            <person name="Matthews N.S.W."/>
            <person name="McLaren S."/>
            <person name="Milne S."/>
            <person name="Mistry S."/>
            <person name="Moore M.J.F."/>
            <person name="Nickerson T."/>
            <person name="O'Dell C.N."/>
            <person name="Oliver K."/>
            <person name="Palmeiri A."/>
            <person name="Palmer S.A."/>
            <person name="Parker A."/>
            <person name="Patel D."/>
            <person name="Pearce A.V."/>
            <person name="Peck A.I."/>
            <person name="Pelan S."/>
            <person name="Phelps K."/>
            <person name="Phillimore B.J."/>
            <person name="Plumb R."/>
            <person name="Rajan J."/>
            <person name="Raymond C."/>
            <person name="Rouse G."/>
            <person name="Saenphimmachak C."/>
            <person name="Sehra H.K."/>
            <person name="Sheridan E."/>
            <person name="Shownkeen R."/>
            <person name="Sims S."/>
            <person name="Skuce C.D."/>
            <person name="Smith M."/>
            <person name="Steward C."/>
            <person name="Subramanian S."/>
            <person name="Sycamore N."/>
            <person name="Tracey A."/>
            <person name="Tromans A."/>
            <person name="Van Helmond Z."/>
            <person name="Wall M."/>
            <person name="Wallis J.M."/>
            <person name="White S."/>
            <person name="Whitehead S.L."/>
            <person name="Wilkinson J.E."/>
            <person name="Willey D.L."/>
            <person name="Williams H."/>
            <person name="Wilming L."/>
            <person name="Wray P.W."/>
            <person name="Wu Z."/>
            <person name="Coulson A."/>
            <person name="Vaudin M."/>
            <person name="Sulston J.E."/>
            <person name="Durbin R.M."/>
            <person name="Hubbard T."/>
            <person name="Wooster R."/>
            <person name="Dunham I."/>
            <person name="Carter N.P."/>
            <person name="McVean G."/>
            <person name="Ross M.T."/>
            <person name="Harrow J."/>
            <person name="Olson M.V."/>
            <person name="Beck S."/>
            <person name="Rogers J."/>
            <person name="Bentley D.R."/>
        </authorList>
    </citation>
    <scope>NUCLEOTIDE SEQUENCE [LARGE SCALE GENOMIC DNA]</scope>
</reference>
<reference key="2">
    <citation type="journal article" date="2004" name="Genome Res.">
        <title>The status, quality, and expansion of the NIH full-length cDNA project: the Mammalian Gene Collection (MGC).</title>
        <authorList>
            <consortium name="The MGC Project Team"/>
        </authorList>
    </citation>
    <scope>NUCLEOTIDE SEQUENCE [LARGE SCALE MRNA]</scope>
    <scope>VARIANTS ASP-22; ASP-319; ASP-551 AND MET-577</scope>
    <source>
        <tissue>Testis</tissue>
    </source>
</reference>
<reference key="3">
    <citation type="journal article" date="2015" name="J. Biol. Chem.">
        <title>Small GTPase Rab2B and Its Specific Binding Protein Golgi-associated Rab2B Interactor-like 4 (GARI-L4) Regulate Golgi Morphology.</title>
        <authorList>
            <person name="Aizawa M."/>
            <person name="Fukuda M."/>
        </authorList>
    </citation>
    <scope>FUNCTION</scope>
    <scope>SUBCELLULAR LOCATION</scope>
    <scope>INTERACTION WITH RAB2B</scope>
</reference>
<feature type="chain" id="PRO_0000261630" description="Golgi-associated RAB2 interactor protein 4">
    <location>
        <begin position="1"/>
        <end position="594"/>
    </location>
</feature>
<feature type="region of interest" description="Disordered" evidence="1">
    <location>
        <begin position="387"/>
        <end position="524"/>
    </location>
</feature>
<feature type="compositionally biased region" description="Polar residues" evidence="1">
    <location>
        <begin position="396"/>
        <end position="406"/>
    </location>
</feature>
<feature type="compositionally biased region" description="Basic and acidic residues" evidence="1">
    <location>
        <begin position="408"/>
        <end position="433"/>
    </location>
</feature>
<feature type="compositionally biased region" description="Basic and acidic residues" evidence="1">
    <location>
        <begin position="442"/>
        <end position="455"/>
    </location>
</feature>
<feature type="compositionally biased region" description="Basic and acidic residues" evidence="1">
    <location>
        <begin position="468"/>
        <end position="477"/>
    </location>
</feature>
<feature type="compositionally biased region" description="Polar residues" evidence="1">
    <location>
        <begin position="511"/>
        <end position="520"/>
    </location>
</feature>
<feature type="sequence variant" id="VAR_029464" description="In dbSNP:rs17853363." evidence="2">
    <original>N</original>
    <variation>D</variation>
    <location>
        <position position="22"/>
    </location>
</feature>
<feature type="sequence variant" id="VAR_029465" description="In dbSNP:rs3122712.">
    <original>N</original>
    <variation>S</variation>
    <location>
        <position position="253"/>
    </location>
</feature>
<feature type="sequence variant" id="VAR_029466" description="In dbSNP:rs17853362." evidence="2">
    <original>G</original>
    <variation>D</variation>
    <location>
        <position position="319"/>
    </location>
</feature>
<feature type="sequence variant" id="VAR_029467" description="In dbSNP:rs3122713." evidence="2">
    <original>N</original>
    <variation>D</variation>
    <location>
        <position position="551"/>
    </location>
</feature>
<feature type="sequence variant" id="VAR_029468" description="In dbSNP:rs3795842." evidence="2">
    <original>T</original>
    <variation>M</variation>
    <location>
        <position position="577"/>
    </location>
</feature>
<comment type="function">
    <text evidence="3">RAB2B effector protein required for the compacted Golgi morphology, probably through interaction with small GTPase RAB2B.</text>
</comment>
<comment type="subunit">
    <text evidence="3">Interacts (via N-terminus) with RAB2B (in GTP-bound form).</text>
</comment>
<comment type="interaction">
    <interactant intactId="EBI-20113335">
        <id>Q8IYT1</id>
    </interactant>
    <interactant intactId="EBI-752037">
        <id>P61019</id>
        <label>RAB2A</label>
    </interactant>
    <organismsDiffer>false</organismsDiffer>
    <experiments>3</experiments>
</comment>
<comment type="interaction">
    <interactant intactId="EBI-20113335">
        <id>Q8IYT1</id>
    </interactant>
    <interactant intactId="EBI-5542466">
        <id>Q8WUD1</id>
        <label>RAB2B</label>
    </interactant>
    <organismsDiffer>false</organismsDiffer>
    <experiments>3</experiments>
</comment>
<comment type="subcellular location">
    <subcellularLocation>
        <location evidence="3">Golgi apparatus</location>
    </subcellularLocation>
</comment>
<comment type="similarity">
    <text evidence="5">Belongs to the GARIN family.</text>
</comment>
<sequence>MNADFLLPYYTAQSGSSMSMFNTTMGKLQRQLYKGEYDIFKYAPIFESDFIQITKRGEVIDVHNRVRMVTMGIARTSPILPLPDVMLLARPATGCEEYAGHGQATKRKKRKAAKNLELTRLLPLRFVRISVQDHEKQQLRLKFATGRSCYLQLCPALDTRDDLFAYWEKLIYLLRPPMESNSSTCGIPAEDMMWMPVFQEDRRSLGAVNLQGKGDQDQVSIQSLHMVSEVCGATSAAYAGGEGLQNDFNKPTNVLNASIPKTSTELAEEPATGGIKEAAAAGAAAGAATGTVAGALSVAAANSAPGQVSAAIAGAATIGAGGNKGNMALAGTASMAPNSTKVAVAGAAGKSSEHVSSASMSLSREGSVSLAIAGVVLTSRTAAEADMDAAAGPPVSTRQSKSSLSGQHGRERTQASAEGCKEGRERREKDRALGRSSHRRRTGESRHKTRGDKIAQKSSSRSSFSHRANRDDKKEKGCGNPGSSRHRDSHKGVSHTPISKESRTSHKSGRSLWTTSSGSSKGLGRVSSFLRNVRANLTTKVVGTPHGRDVNVMAKMAERSTNVAIAETAEGGQGLETVGSMTPDIMETVTFEAH</sequence>
<dbReference type="EMBL" id="AL590648">
    <property type="status" value="NOT_ANNOTATED_CDS"/>
    <property type="molecule type" value="Genomic_DNA"/>
</dbReference>
<dbReference type="EMBL" id="BC035007">
    <property type="protein sequence ID" value="AAH35007.1"/>
    <property type="molecule type" value="mRNA"/>
</dbReference>
<dbReference type="CCDS" id="CCDS1507.1"/>
<dbReference type="RefSeq" id="NP_705834.2">
    <property type="nucleotide sequence ID" value="NM_153606.4"/>
</dbReference>
<dbReference type="BioGRID" id="127227">
    <property type="interactions" value="2"/>
</dbReference>
<dbReference type="FunCoup" id="Q8IYT1">
    <property type="interactions" value="53"/>
</dbReference>
<dbReference type="IntAct" id="Q8IYT1">
    <property type="interactions" value="2"/>
</dbReference>
<dbReference type="STRING" id="9606.ENSP00000294829"/>
<dbReference type="GlyGen" id="Q8IYT1">
    <property type="glycosylation" value="1 site, 1 O-linked glycan (1 site)"/>
</dbReference>
<dbReference type="iPTMnet" id="Q8IYT1"/>
<dbReference type="PhosphoSitePlus" id="Q8IYT1"/>
<dbReference type="BioMuta" id="FAM71A"/>
<dbReference type="DMDM" id="118572310"/>
<dbReference type="MassIVE" id="Q8IYT1"/>
<dbReference type="PaxDb" id="9606-ENSP00000294829"/>
<dbReference type="PeptideAtlas" id="Q8IYT1"/>
<dbReference type="ProteomicsDB" id="71232"/>
<dbReference type="Antibodypedia" id="34608">
    <property type="antibodies" value="114 antibodies from 18 providers"/>
</dbReference>
<dbReference type="DNASU" id="149647"/>
<dbReference type="Ensembl" id="ENST00000294829.5">
    <property type="protein sequence ID" value="ENSP00000294829.3"/>
    <property type="gene ID" value="ENSG00000162771.8"/>
</dbReference>
<dbReference type="GeneID" id="149647"/>
<dbReference type="KEGG" id="hsa:149647"/>
<dbReference type="MANE-Select" id="ENST00000294829.5">
    <property type="protein sequence ID" value="ENSP00000294829.3"/>
    <property type="RefSeq nucleotide sequence ID" value="NM_153606.4"/>
    <property type="RefSeq protein sequence ID" value="NP_705834.2"/>
</dbReference>
<dbReference type="UCSC" id="uc001hjk.4">
    <property type="organism name" value="human"/>
</dbReference>
<dbReference type="AGR" id="HGNC:26541"/>
<dbReference type="CTD" id="149647"/>
<dbReference type="GeneCards" id="GARIN4"/>
<dbReference type="HGNC" id="HGNC:26541">
    <property type="gene designation" value="GARIN4"/>
</dbReference>
<dbReference type="HPA" id="ENSG00000162771">
    <property type="expression patterns" value="Tissue enriched (testis)"/>
</dbReference>
<dbReference type="MIM" id="619852">
    <property type="type" value="gene"/>
</dbReference>
<dbReference type="neXtProt" id="NX_Q8IYT1"/>
<dbReference type="OpenTargets" id="ENSG00000162771"/>
<dbReference type="VEuPathDB" id="HostDB:ENSG00000162771"/>
<dbReference type="eggNOG" id="ENOG502S0XQ">
    <property type="taxonomic scope" value="Eukaryota"/>
</dbReference>
<dbReference type="GeneTree" id="ENSGT00940000162770"/>
<dbReference type="HOGENOM" id="CLU_035424_0_0_1"/>
<dbReference type="InParanoid" id="Q8IYT1"/>
<dbReference type="OMA" id="GDQDQVS"/>
<dbReference type="OrthoDB" id="9942703at2759"/>
<dbReference type="PAN-GO" id="Q8IYT1">
    <property type="GO annotations" value="0 GO annotations based on evolutionary models"/>
</dbReference>
<dbReference type="PhylomeDB" id="Q8IYT1"/>
<dbReference type="TreeFam" id="TF336050"/>
<dbReference type="PathwayCommons" id="Q8IYT1"/>
<dbReference type="SignaLink" id="Q8IYT1"/>
<dbReference type="BioGRID-ORCS" id="149647">
    <property type="hits" value="7 hits in 1144 CRISPR screens"/>
</dbReference>
<dbReference type="GenomeRNAi" id="149647"/>
<dbReference type="Pharos" id="Q8IYT1">
    <property type="development level" value="Tdark"/>
</dbReference>
<dbReference type="PRO" id="PR:Q8IYT1"/>
<dbReference type="Proteomes" id="UP000005640">
    <property type="component" value="Chromosome 1"/>
</dbReference>
<dbReference type="RNAct" id="Q8IYT1">
    <property type="molecule type" value="protein"/>
</dbReference>
<dbReference type="Bgee" id="ENSG00000162771">
    <property type="expression patterns" value="Expressed in male germ line stem cell (sensu Vertebrata) in testis and 115 other cell types or tissues"/>
</dbReference>
<dbReference type="GO" id="GO:0005794">
    <property type="term" value="C:Golgi apparatus"/>
    <property type="evidence" value="ECO:0000314"/>
    <property type="project" value="UniProtKB"/>
</dbReference>
<dbReference type="GO" id="GO:0005634">
    <property type="term" value="C:nucleus"/>
    <property type="evidence" value="ECO:0007005"/>
    <property type="project" value="UniProtKB"/>
</dbReference>
<dbReference type="GO" id="GO:0061827">
    <property type="term" value="C:sperm head"/>
    <property type="evidence" value="ECO:0007669"/>
    <property type="project" value="Ensembl"/>
</dbReference>
<dbReference type="GO" id="GO:0000902">
    <property type="term" value="P:cell morphogenesis"/>
    <property type="evidence" value="ECO:0007669"/>
    <property type="project" value="Ensembl"/>
</dbReference>
<dbReference type="GO" id="GO:0007030">
    <property type="term" value="P:Golgi organization"/>
    <property type="evidence" value="ECO:0000315"/>
    <property type="project" value="UniProtKB"/>
</dbReference>
<dbReference type="GO" id="GO:0007341">
    <property type="term" value="P:penetration of zona pellucida"/>
    <property type="evidence" value="ECO:0007669"/>
    <property type="project" value="Ensembl"/>
</dbReference>
<dbReference type="GO" id="GO:0007286">
    <property type="term" value="P:spermatid development"/>
    <property type="evidence" value="ECO:0007669"/>
    <property type="project" value="Ensembl"/>
</dbReference>
<dbReference type="InterPro" id="IPR022168">
    <property type="entry name" value="GARIL-like_Rab2B-bd"/>
</dbReference>
<dbReference type="PANTHER" id="PTHR22574">
    <property type="match status" value="1"/>
</dbReference>
<dbReference type="PANTHER" id="PTHR22574:SF15">
    <property type="entry name" value="GOLGI-ASSOCIATED RAB2 INTERACTOR PROTEIN 4"/>
    <property type="match status" value="1"/>
</dbReference>
<dbReference type="Pfam" id="PF12480">
    <property type="entry name" value="GARIL_Rab2_bd"/>
    <property type="match status" value="1"/>
</dbReference>
<organism>
    <name type="scientific">Homo sapiens</name>
    <name type="common">Human</name>
    <dbReference type="NCBI Taxonomy" id="9606"/>
    <lineage>
        <taxon>Eukaryota</taxon>
        <taxon>Metazoa</taxon>
        <taxon>Chordata</taxon>
        <taxon>Craniata</taxon>
        <taxon>Vertebrata</taxon>
        <taxon>Euteleostomi</taxon>
        <taxon>Mammalia</taxon>
        <taxon>Eutheria</taxon>
        <taxon>Euarchontoglires</taxon>
        <taxon>Primates</taxon>
        <taxon>Haplorrhini</taxon>
        <taxon>Catarrhini</taxon>
        <taxon>Hominidae</taxon>
        <taxon>Homo</taxon>
    </lineage>
</organism>
<keyword id="KW-0333">Golgi apparatus</keyword>
<keyword id="KW-1267">Proteomics identification</keyword>
<keyword id="KW-1185">Reference proteome</keyword>
<accession>Q8IYT1</accession>
<accession>Q5VTZ1</accession>
<proteinExistence type="evidence at protein level"/>
<evidence type="ECO:0000256" key="1">
    <source>
        <dbReference type="SAM" id="MobiDB-lite"/>
    </source>
</evidence>
<evidence type="ECO:0000269" key="2">
    <source>
    </source>
</evidence>
<evidence type="ECO:0000269" key="3">
    <source>
    </source>
</evidence>
<evidence type="ECO:0000303" key="4">
    <source>
    </source>
</evidence>
<evidence type="ECO:0000305" key="5"/>
<evidence type="ECO:0000312" key="6">
    <source>
        <dbReference type="HGNC" id="HGNC:26541"/>
    </source>
</evidence>
<name>GAR4_HUMAN</name>
<gene>
    <name evidence="6" type="primary">GARIN4</name>
    <name type="synonym">FAM71A</name>
</gene>